<accession>B1JIW7</accession>
<name>RS3_YERPY</name>
<keyword id="KW-0687">Ribonucleoprotein</keyword>
<keyword id="KW-0689">Ribosomal protein</keyword>
<keyword id="KW-0694">RNA-binding</keyword>
<keyword id="KW-0699">rRNA-binding</keyword>
<sequence>MGQKVHPNGIRLGIVKAWNSTWYANTKEFADNLDSDFKVRQFLTKELAKASVSRIVIERPAKSIRVTIHTARPGIVIGKKGEDVEKLRKVVADIAGVPAQINIAEVRKPELDAKLVADSITSQLERRVMFRRAMKRAVQNAMRLGAKGIKVEVSGRLGGAEIARTEWYREGRVPLHTLRADIDYNTSEAHTTYGVIGVKVWIFKGEILGGMAAVEQPEPAAQPKKQQRKGRK</sequence>
<gene>
    <name evidence="1" type="primary">rpsC</name>
    <name type="ordered locus">YPK_0289</name>
</gene>
<dbReference type="EMBL" id="CP000950">
    <property type="protein sequence ID" value="ACA66602.1"/>
    <property type="molecule type" value="Genomic_DNA"/>
</dbReference>
<dbReference type="RefSeq" id="WP_002221644.1">
    <property type="nucleotide sequence ID" value="NZ_CP009792.1"/>
</dbReference>
<dbReference type="SMR" id="B1JIW7"/>
<dbReference type="GeneID" id="97454237"/>
<dbReference type="KEGG" id="ypy:YPK_0289"/>
<dbReference type="PATRIC" id="fig|502800.11.peg.896"/>
<dbReference type="GO" id="GO:0022627">
    <property type="term" value="C:cytosolic small ribosomal subunit"/>
    <property type="evidence" value="ECO:0007669"/>
    <property type="project" value="TreeGrafter"/>
</dbReference>
<dbReference type="GO" id="GO:0003729">
    <property type="term" value="F:mRNA binding"/>
    <property type="evidence" value="ECO:0007669"/>
    <property type="project" value="UniProtKB-UniRule"/>
</dbReference>
<dbReference type="GO" id="GO:0019843">
    <property type="term" value="F:rRNA binding"/>
    <property type="evidence" value="ECO:0007669"/>
    <property type="project" value="UniProtKB-UniRule"/>
</dbReference>
<dbReference type="GO" id="GO:0003735">
    <property type="term" value="F:structural constituent of ribosome"/>
    <property type="evidence" value="ECO:0007669"/>
    <property type="project" value="InterPro"/>
</dbReference>
<dbReference type="GO" id="GO:0006412">
    <property type="term" value="P:translation"/>
    <property type="evidence" value="ECO:0007669"/>
    <property type="project" value="UniProtKB-UniRule"/>
</dbReference>
<dbReference type="CDD" id="cd02412">
    <property type="entry name" value="KH-II_30S_S3"/>
    <property type="match status" value="1"/>
</dbReference>
<dbReference type="FunFam" id="3.30.1140.32:FF:000001">
    <property type="entry name" value="30S ribosomal protein S3"/>
    <property type="match status" value="1"/>
</dbReference>
<dbReference type="FunFam" id="3.30.300.20:FF:000001">
    <property type="entry name" value="30S ribosomal protein S3"/>
    <property type="match status" value="1"/>
</dbReference>
<dbReference type="Gene3D" id="3.30.300.20">
    <property type="match status" value="1"/>
</dbReference>
<dbReference type="Gene3D" id="3.30.1140.32">
    <property type="entry name" value="Ribosomal protein S3, C-terminal domain"/>
    <property type="match status" value="1"/>
</dbReference>
<dbReference type="HAMAP" id="MF_01309_B">
    <property type="entry name" value="Ribosomal_uS3_B"/>
    <property type="match status" value="1"/>
</dbReference>
<dbReference type="InterPro" id="IPR004087">
    <property type="entry name" value="KH_dom"/>
</dbReference>
<dbReference type="InterPro" id="IPR015946">
    <property type="entry name" value="KH_dom-like_a/b"/>
</dbReference>
<dbReference type="InterPro" id="IPR004044">
    <property type="entry name" value="KH_dom_type_2"/>
</dbReference>
<dbReference type="InterPro" id="IPR009019">
    <property type="entry name" value="KH_sf_prok-type"/>
</dbReference>
<dbReference type="InterPro" id="IPR036419">
    <property type="entry name" value="Ribosomal_S3_C_sf"/>
</dbReference>
<dbReference type="InterPro" id="IPR005704">
    <property type="entry name" value="Ribosomal_uS3_bac-typ"/>
</dbReference>
<dbReference type="InterPro" id="IPR001351">
    <property type="entry name" value="Ribosomal_uS3_C"/>
</dbReference>
<dbReference type="InterPro" id="IPR018280">
    <property type="entry name" value="Ribosomal_uS3_CS"/>
</dbReference>
<dbReference type="NCBIfam" id="TIGR01009">
    <property type="entry name" value="rpsC_bact"/>
    <property type="match status" value="1"/>
</dbReference>
<dbReference type="PANTHER" id="PTHR11760">
    <property type="entry name" value="30S/40S RIBOSOMAL PROTEIN S3"/>
    <property type="match status" value="1"/>
</dbReference>
<dbReference type="PANTHER" id="PTHR11760:SF19">
    <property type="entry name" value="SMALL RIBOSOMAL SUBUNIT PROTEIN US3C"/>
    <property type="match status" value="1"/>
</dbReference>
<dbReference type="Pfam" id="PF07650">
    <property type="entry name" value="KH_2"/>
    <property type="match status" value="1"/>
</dbReference>
<dbReference type="Pfam" id="PF00189">
    <property type="entry name" value="Ribosomal_S3_C"/>
    <property type="match status" value="1"/>
</dbReference>
<dbReference type="SMART" id="SM00322">
    <property type="entry name" value="KH"/>
    <property type="match status" value="1"/>
</dbReference>
<dbReference type="SUPFAM" id="SSF54814">
    <property type="entry name" value="Prokaryotic type KH domain (KH-domain type II)"/>
    <property type="match status" value="1"/>
</dbReference>
<dbReference type="SUPFAM" id="SSF54821">
    <property type="entry name" value="Ribosomal protein S3 C-terminal domain"/>
    <property type="match status" value="1"/>
</dbReference>
<dbReference type="PROSITE" id="PS50823">
    <property type="entry name" value="KH_TYPE_2"/>
    <property type="match status" value="1"/>
</dbReference>
<dbReference type="PROSITE" id="PS00548">
    <property type="entry name" value="RIBOSOMAL_S3"/>
    <property type="match status" value="1"/>
</dbReference>
<protein>
    <recommendedName>
        <fullName evidence="1">Small ribosomal subunit protein uS3</fullName>
    </recommendedName>
    <alternativeName>
        <fullName evidence="2">30S ribosomal protein S3</fullName>
    </alternativeName>
</protein>
<feature type="chain" id="PRO_1000141039" description="Small ribosomal subunit protein uS3">
    <location>
        <begin position="1"/>
        <end position="232"/>
    </location>
</feature>
<feature type="domain" description="KH type-2" evidence="1">
    <location>
        <begin position="39"/>
        <end position="107"/>
    </location>
</feature>
<proteinExistence type="inferred from homology"/>
<comment type="function">
    <text evidence="1">Binds the lower part of the 30S subunit head. Binds mRNA in the 70S ribosome, positioning it for translation.</text>
</comment>
<comment type="subunit">
    <text evidence="1">Part of the 30S ribosomal subunit. Forms a tight complex with proteins S10 and S14.</text>
</comment>
<comment type="similarity">
    <text evidence="1">Belongs to the universal ribosomal protein uS3 family.</text>
</comment>
<organism>
    <name type="scientific">Yersinia pseudotuberculosis serotype O:3 (strain YPIII)</name>
    <dbReference type="NCBI Taxonomy" id="502800"/>
    <lineage>
        <taxon>Bacteria</taxon>
        <taxon>Pseudomonadati</taxon>
        <taxon>Pseudomonadota</taxon>
        <taxon>Gammaproteobacteria</taxon>
        <taxon>Enterobacterales</taxon>
        <taxon>Yersiniaceae</taxon>
        <taxon>Yersinia</taxon>
    </lineage>
</organism>
<reference key="1">
    <citation type="submission" date="2008-02" db="EMBL/GenBank/DDBJ databases">
        <title>Complete sequence of Yersinia pseudotuberculosis YPIII.</title>
        <authorList>
            <consortium name="US DOE Joint Genome Institute"/>
            <person name="Copeland A."/>
            <person name="Lucas S."/>
            <person name="Lapidus A."/>
            <person name="Glavina del Rio T."/>
            <person name="Dalin E."/>
            <person name="Tice H."/>
            <person name="Bruce D."/>
            <person name="Goodwin L."/>
            <person name="Pitluck S."/>
            <person name="Munk A.C."/>
            <person name="Brettin T."/>
            <person name="Detter J.C."/>
            <person name="Han C."/>
            <person name="Tapia R."/>
            <person name="Schmutz J."/>
            <person name="Larimer F."/>
            <person name="Land M."/>
            <person name="Hauser L."/>
            <person name="Challacombe J.F."/>
            <person name="Green L."/>
            <person name="Lindler L.E."/>
            <person name="Nikolich M.P."/>
            <person name="Richardson P."/>
        </authorList>
    </citation>
    <scope>NUCLEOTIDE SEQUENCE [LARGE SCALE GENOMIC DNA]</scope>
    <source>
        <strain>YPIII</strain>
    </source>
</reference>
<evidence type="ECO:0000255" key="1">
    <source>
        <dbReference type="HAMAP-Rule" id="MF_01309"/>
    </source>
</evidence>
<evidence type="ECO:0000305" key="2"/>